<accession>O83108</accession>
<sequence length="176" mass="19197">MCSFSTSVLCGPFQAVTYSAHAGAVCQTLGIVFSRSEHSTPSVCADAFSMKVRGIPVLQRRTWALVLLVLSSTSACVRKNSLEDVRFPSSSPIGEARRFAVITKAYVLLRDKPGVTGIVIAYARRKDIFPVLGIDLLSKDKESALWVNVERGWLPWDCVQLYSSKAKALAASKKLS</sequence>
<feature type="chain" id="PRO_0000202185" description="Uncharacterized protein TP_0069">
    <location>
        <begin position="1"/>
        <end position="176"/>
    </location>
</feature>
<name>Y069_TREPA</name>
<protein>
    <recommendedName>
        <fullName>Uncharacterized protein TP_0069</fullName>
    </recommendedName>
</protein>
<proteinExistence type="predicted"/>
<organism>
    <name type="scientific">Treponema pallidum (strain Nichols)</name>
    <dbReference type="NCBI Taxonomy" id="243276"/>
    <lineage>
        <taxon>Bacteria</taxon>
        <taxon>Pseudomonadati</taxon>
        <taxon>Spirochaetota</taxon>
        <taxon>Spirochaetia</taxon>
        <taxon>Spirochaetales</taxon>
        <taxon>Treponemataceae</taxon>
        <taxon>Treponema</taxon>
    </lineage>
</organism>
<dbReference type="EMBL" id="AE000520">
    <property type="protein sequence ID" value="AAC65066.1"/>
    <property type="molecule type" value="Genomic_DNA"/>
</dbReference>
<dbReference type="PIR" id="E71371">
    <property type="entry name" value="E71371"/>
</dbReference>
<dbReference type="STRING" id="243276.TP_0069"/>
<dbReference type="EnsemblBacteria" id="AAC65066">
    <property type="protein sequence ID" value="AAC65066"/>
    <property type="gene ID" value="TP_0069"/>
</dbReference>
<dbReference type="KEGG" id="tpa:TP_0069"/>
<dbReference type="KEGG" id="tpw:TPANIC_0069"/>
<dbReference type="eggNOG" id="ENOG5032FZA">
    <property type="taxonomic scope" value="Bacteria"/>
</dbReference>
<dbReference type="HOGENOM" id="CLU_130453_0_0_12"/>
<dbReference type="Proteomes" id="UP000000811">
    <property type="component" value="Chromosome"/>
</dbReference>
<keyword id="KW-1185">Reference proteome</keyword>
<gene>
    <name type="ordered locus">TP_0069</name>
</gene>
<reference key="1">
    <citation type="journal article" date="1998" name="Science">
        <title>Complete genome sequence of Treponema pallidum, the syphilis spirochete.</title>
        <authorList>
            <person name="Fraser C.M."/>
            <person name="Norris S.J."/>
            <person name="Weinstock G.M."/>
            <person name="White O."/>
            <person name="Sutton G.G."/>
            <person name="Dodson R.J."/>
            <person name="Gwinn M.L."/>
            <person name="Hickey E.K."/>
            <person name="Clayton R.A."/>
            <person name="Ketchum K.A."/>
            <person name="Sodergren E."/>
            <person name="Hardham J.M."/>
            <person name="McLeod M.P."/>
            <person name="Salzberg S.L."/>
            <person name="Peterson J.D."/>
            <person name="Khalak H.G."/>
            <person name="Richardson D.L."/>
            <person name="Howell J.K."/>
            <person name="Chidambaram M."/>
            <person name="Utterback T.R."/>
            <person name="McDonald L.A."/>
            <person name="Artiach P."/>
            <person name="Bowman C."/>
            <person name="Cotton M.D."/>
            <person name="Fujii C."/>
            <person name="Garland S.A."/>
            <person name="Hatch B."/>
            <person name="Horst K."/>
            <person name="Roberts K.M."/>
            <person name="Sandusky M."/>
            <person name="Weidman J.F."/>
            <person name="Smith H.O."/>
            <person name="Venter J.C."/>
        </authorList>
    </citation>
    <scope>NUCLEOTIDE SEQUENCE [LARGE SCALE GENOMIC DNA]</scope>
    <source>
        <strain>Nichols</strain>
    </source>
</reference>